<dbReference type="EMBL" id="AY495669">
    <property type="protein sequence ID" value="AAR92202.1"/>
    <property type="molecule type" value="mRNA"/>
</dbReference>
<dbReference type="EMBL" id="AK041311">
    <property type="protein sequence ID" value="BAC30900.1"/>
    <property type="molecule type" value="mRNA"/>
</dbReference>
<dbReference type="EMBL" id="AK135149">
    <property type="protein sequence ID" value="BAE22441.1"/>
    <property type="molecule type" value="mRNA"/>
</dbReference>
<dbReference type="EMBL" id="AC122430">
    <property type="status" value="NOT_ANNOTATED_CDS"/>
    <property type="molecule type" value="Genomic_DNA"/>
</dbReference>
<dbReference type="EMBL" id="AC125487">
    <property type="status" value="NOT_ANNOTATED_CDS"/>
    <property type="molecule type" value="Genomic_DNA"/>
</dbReference>
<dbReference type="EMBL" id="CH466549">
    <property type="protein sequence ID" value="EDL18942.1"/>
    <property type="molecule type" value="Genomic_DNA"/>
</dbReference>
<dbReference type="EMBL" id="BC096471">
    <property type="protein sequence ID" value="AAH96471.1"/>
    <property type="molecule type" value="mRNA"/>
</dbReference>
<dbReference type="EMBL" id="BC138297">
    <property type="protein sequence ID" value="AAI38298.1"/>
    <property type="molecule type" value="mRNA"/>
</dbReference>
<dbReference type="EMBL" id="BC138298">
    <property type="protein sequence ID" value="AAI38299.1"/>
    <property type="molecule type" value="mRNA"/>
</dbReference>
<dbReference type="EMBL" id="AK172945">
    <property type="protein sequence ID" value="BAD32223.1"/>
    <property type="molecule type" value="mRNA"/>
</dbReference>
<dbReference type="CCDS" id="CCDS26094.1"/>
<dbReference type="RefSeq" id="NP_001409741.1">
    <property type="nucleotide sequence ID" value="NM_001422812.1"/>
</dbReference>
<dbReference type="RefSeq" id="NP_958926.1">
    <property type="nucleotide sequence ID" value="NM_201518.4"/>
</dbReference>
<dbReference type="RefSeq" id="XP_006516118.1">
    <property type="nucleotide sequence ID" value="XM_006516055.3"/>
</dbReference>
<dbReference type="RefSeq" id="XP_011242434.1">
    <property type="nucleotide sequence ID" value="XM_011244132.3"/>
</dbReference>
<dbReference type="RefSeq" id="XP_036013410.1">
    <property type="nucleotide sequence ID" value="XM_036157517.1"/>
</dbReference>
<dbReference type="RefSeq" id="XP_036013411.1">
    <property type="nucleotide sequence ID" value="XM_036157518.1"/>
</dbReference>
<dbReference type="PDB" id="4V2C">
    <property type="method" value="X-ray"/>
    <property type="resolution" value="4.00 A"/>
    <property type="chains" value="A/C=35-362"/>
</dbReference>
<dbReference type="PDB" id="4V2D">
    <property type="method" value="X-ray"/>
    <property type="resolution" value="2.50 A"/>
    <property type="chains" value="A=36-361"/>
</dbReference>
<dbReference type="PDB" id="5FTT">
    <property type="method" value="X-ray"/>
    <property type="resolution" value="3.40 A"/>
    <property type="chains" value="B/F=35-362"/>
</dbReference>
<dbReference type="PDB" id="5FTU">
    <property type="method" value="X-ray"/>
    <property type="resolution" value="6.01 A"/>
    <property type="chains" value="B/F/J=35-362"/>
</dbReference>
<dbReference type="PDBsum" id="4V2C"/>
<dbReference type="PDBsum" id="4V2D"/>
<dbReference type="PDBsum" id="5FTT"/>
<dbReference type="PDBsum" id="5FTU"/>
<dbReference type="SMR" id="Q8BLU0"/>
<dbReference type="DIP" id="DIP-61401N"/>
<dbReference type="FunCoup" id="Q8BLU0">
    <property type="interactions" value="66"/>
</dbReference>
<dbReference type="IntAct" id="Q8BLU0">
    <property type="interactions" value="3"/>
</dbReference>
<dbReference type="MINT" id="Q8BLU0"/>
<dbReference type="STRING" id="10090.ENSMUSP00000062171"/>
<dbReference type="GlyCosmos" id="Q8BLU0">
    <property type="glycosylation" value="1 site, No reported glycans"/>
</dbReference>
<dbReference type="GlyGen" id="Q8BLU0">
    <property type="glycosylation" value="2 sites, 1 N-linked glycan (1 site)"/>
</dbReference>
<dbReference type="iPTMnet" id="Q8BLU0"/>
<dbReference type="PhosphoSitePlus" id="Q8BLU0"/>
<dbReference type="SwissPalm" id="Q8BLU0"/>
<dbReference type="jPOST" id="Q8BLU0"/>
<dbReference type="PaxDb" id="10090-ENSMUSP00000062171"/>
<dbReference type="ProteomicsDB" id="273003"/>
<dbReference type="Pumba" id="Q8BLU0"/>
<dbReference type="Antibodypedia" id="55194">
    <property type="antibodies" value="73 antibodies from 16 providers"/>
</dbReference>
<dbReference type="DNASU" id="399558"/>
<dbReference type="Ensembl" id="ENSMUST00000057324.4">
    <property type="protein sequence ID" value="ENSMUSP00000062171.4"/>
    <property type="gene ID" value="ENSMUSG00000047414.7"/>
</dbReference>
<dbReference type="Ensembl" id="ENSMUST00000110117.2">
    <property type="protein sequence ID" value="ENSMUSP00000105744.2"/>
    <property type="gene ID" value="ENSMUSG00000047414.7"/>
</dbReference>
<dbReference type="GeneID" id="399558"/>
<dbReference type="KEGG" id="mmu:399558"/>
<dbReference type="UCSC" id="uc007olc.2">
    <property type="organism name" value="mouse"/>
</dbReference>
<dbReference type="AGR" id="MGI:3603594"/>
<dbReference type="CTD" id="23768"/>
<dbReference type="MGI" id="MGI:3603594">
    <property type="gene designation" value="Flrt2"/>
</dbReference>
<dbReference type="VEuPathDB" id="HostDB:ENSMUSG00000047414"/>
<dbReference type="eggNOG" id="ENOG502QSJU">
    <property type="taxonomic scope" value="Eukaryota"/>
</dbReference>
<dbReference type="GeneTree" id="ENSGT00940000158937"/>
<dbReference type="HOGENOM" id="CLU_027624_0_0_1"/>
<dbReference type="InParanoid" id="Q8BLU0"/>
<dbReference type="OMA" id="DQPPWPT"/>
<dbReference type="OrthoDB" id="676979at2759"/>
<dbReference type="PhylomeDB" id="Q8BLU0"/>
<dbReference type="TreeFam" id="TF315838"/>
<dbReference type="Reactome" id="R-MMU-5654687">
    <property type="pathway name" value="Downstream signaling of activated FGFR1"/>
</dbReference>
<dbReference type="BioGRID-ORCS" id="399558">
    <property type="hits" value="1 hit in 78 CRISPR screens"/>
</dbReference>
<dbReference type="ChiTaRS" id="Flrt2">
    <property type="organism name" value="mouse"/>
</dbReference>
<dbReference type="EvolutionaryTrace" id="Q8BLU0"/>
<dbReference type="PRO" id="PR:Q8BLU0"/>
<dbReference type="Proteomes" id="UP000000589">
    <property type="component" value="Chromosome 12"/>
</dbReference>
<dbReference type="RNAct" id="Q8BLU0">
    <property type="molecule type" value="protein"/>
</dbReference>
<dbReference type="Bgee" id="ENSMUSG00000047414">
    <property type="expression patterns" value="Expressed in rostral migratory stream and 239 other cell types or tissues"/>
</dbReference>
<dbReference type="GO" id="GO:0005911">
    <property type="term" value="C:cell-cell junction"/>
    <property type="evidence" value="ECO:0000314"/>
    <property type="project" value="UniProtKB"/>
</dbReference>
<dbReference type="GO" id="GO:0005789">
    <property type="term" value="C:endoplasmic reticulum membrane"/>
    <property type="evidence" value="ECO:0007669"/>
    <property type="project" value="UniProtKB-SubCell"/>
</dbReference>
<dbReference type="GO" id="GO:0005615">
    <property type="term" value="C:extracellular space"/>
    <property type="evidence" value="ECO:0000314"/>
    <property type="project" value="MGI"/>
</dbReference>
<dbReference type="GO" id="GO:0005925">
    <property type="term" value="C:focal adhesion"/>
    <property type="evidence" value="ECO:0007669"/>
    <property type="project" value="UniProtKB-SubCell"/>
</dbReference>
<dbReference type="GO" id="GO:0098978">
    <property type="term" value="C:glutamatergic synapse"/>
    <property type="evidence" value="ECO:0000314"/>
    <property type="project" value="SynGO"/>
</dbReference>
<dbReference type="GO" id="GO:0043005">
    <property type="term" value="C:neuron projection"/>
    <property type="evidence" value="ECO:0007669"/>
    <property type="project" value="UniProtKB-KW"/>
</dbReference>
<dbReference type="GO" id="GO:0005886">
    <property type="term" value="C:plasma membrane"/>
    <property type="evidence" value="ECO:0000314"/>
    <property type="project" value="UniProtKB"/>
</dbReference>
<dbReference type="GO" id="GO:0045211">
    <property type="term" value="C:postsynaptic membrane"/>
    <property type="evidence" value="ECO:0000314"/>
    <property type="project" value="SynGO"/>
</dbReference>
<dbReference type="GO" id="GO:0042734">
    <property type="term" value="C:presynaptic membrane"/>
    <property type="evidence" value="ECO:0000314"/>
    <property type="project" value="SynGO"/>
</dbReference>
<dbReference type="GO" id="GO:0045499">
    <property type="term" value="F:chemorepellent activity"/>
    <property type="evidence" value="ECO:0000314"/>
    <property type="project" value="MGI"/>
</dbReference>
<dbReference type="GO" id="GO:0005104">
    <property type="term" value="F:fibroblast growth factor receptor binding"/>
    <property type="evidence" value="ECO:0000353"/>
    <property type="project" value="UniProtKB"/>
</dbReference>
<dbReference type="GO" id="GO:0007411">
    <property type="term" value="P:axon guidance"/>
    <property type="evidence" value="ECO:0000316"/>
    <property type="project" value="MGI"/>
</dbReference>
<dbReference type="GO" id="GO:0071711">
    <property type="term" value="P:basement membrane organization"/>
    <property type="evidence" value="ECO:0000315"/>
    <property type="project" value="UniProtKB"/>
</dbReference>
<dbReference type="GO" id="GO:0061343">
    <property type="term" value="P:cell adhesion involved in heart morphogenesis"/>
    <property type="evidence" value="ECO:0000315"/>
    <property type="project" value="UniProtKB"/>
</dbReference>
<dbReference type="GO" id="GO:0008543">
    <property type="term" value="P:fibroblast growth factor receptor signaling pathway"/>
    <property type="evidence" value="ECO:0000315"/>
    <property type="project" value="UniProtKB"/>
</dbReference>
<dbReference type="GO" id="GO:0003007">
    <property type="term" value="P:heart morphogenesis"/>
    <property type="evidence" value="ECO:0000315"/>
    <property type="project" value="UniProtKB"/>
</dbReference>
<dbReference type="GO" id="GO:0051965">
    <property type="term" value="P:positive regulation of synapse assembly"/>
    <property type="evidence" value="ECO:0000314"/>
    <property type="project" value="MGI"/>
</dbReference>
<dbReference type="GO" id="GO:2001222">
    <property type="term" value="P:regulation of neuron migration"/>
    <property type="evidence" value="ECO:0000316"/>
    <property type="project" value="MGI"/>
</dbReference>
<dbReference type="FunFam" id="3.80.10.10:FF:000043">
    <property type="entry name" value="Leucine-rich repeat transmembrane protein FLRT3"/>
    <property type="match status" value="1"/>
</dbReference>
<dbReference type="Gene3D" id="2.60.40.10">
    <property type="entry name" value="Immunoglobulins"/>
    <property type="match status" value="1"/>
</dbReference>
<dbReference type="Gene3D" id="3.80.10.10">
    <property type="entry name" value="Ribonuclease Inhibitor"/>
    <property type="match status" value="1"/>
</dbReference>
<dbReference type="InterPro" id="IPR000483">
    <property type="entry name" value="Cys-rich_flank_reg_C"/>
</dbReference>
<dbReference type="InterPro" id="IPR003961">
    <property type="entry name" value="FN3_dom"/>
</dbReference>
<dbReference type="InterPro" id="IPR036116">
    <property type="entry name" value="FN3_sf"/>
</dbReference>
<dbReference type="InterPro" id="IPR013783">
    <property type="entry name" value="Ig-like_fold"/>
</dbReference>
<dbReference type="InterPro" id="IPR001611">
    <property type="entry name" value="Leu-rich_rpt"/>
</dbReference>
<dbReference type="InterPro" id="IPR003591">
    <property type="entry name" value="Leu-rich_rpt_typical-subtyp"/>
</dbReference>
<dbReference type="InterPro" id="IPR032675">
    <property type="entry name" value="LRR_dom_sf"/>
</dbReference>
<dbReference type="InterPro" id="IPR000372">
    <property type="entry name" value="LRRNT"/>
</dbReference>
<dbReference type="InterPro" id="IPR050333">
    <property type="entry name" value="SLRP"/>
</dbReference>
<dbReference type="PANTHER" id="PTHR45712">
    <property type="entry name" value="AGAP008170-PA"/>
    <property type="match status" value="1"/>
</dbReference>
<dbReference type="PANTHER" id="PTHR45712:SF16">
    <property type="entry name" value="LEUCINE-RICH REPEAT TRANSMEMBRANE PROTEIN FLRT2"/>
    <property type="match status" value="1"/>
</dbReference>
<dbReference type="Pfam" id="PF13855">
    <property type="entry name" value="LRR_8"/>
    <property type="match status" value="3"/>
</dbReference>
<dbReference type="Pfam" id="PF01463">
    <property type="entry name" value="LRRCT"/>
    <property type="match status" value="1"/>
</dbReference>
<dbReference type="SMART" id="SM00369">
    <property type="entry name" value="LRR_TYP"/>
    <property type="match status" value="7"/>
</dbReference>
<dbReference type="SMART" id="SM00082">
    <property type="entry name" value="LRRCT"/>
    <property type="match status" value="1"/>
</dbReference>
<dbReference type="SMART" id="SM00013">
    <property type="entry name" value="LRRNT"/>
    <property type="match status" value="1"/>
</dbReference>
<dbReference type="SUPFAM" id="SSF49265">
    <property type="entry name" value="Fibronectin type III"/>
    <property type="match status" value="1"/>
</dbReference>
<dbReference type="SUPFAM" id="SSF52058">
    <property type="entry name" value="L domain-like"/>
    <property type="match status" value="1"/>
</dbReference>
<dbReference type="PROSITE" id="PS50853">
    <property type="entry name" value="FN3"/>
    <property type="match status" value="1"/>
</dbReference>
<evidence type="ECO:0000250" key="1">
    <source>
        <dbReference type="UniProtKB" id="D3ZTV3"/>
    </source>
</evidence>
<evidence type="ECO:0000255" key="2"/>
<evidence type="ECO:0000255" key="3">
    <source>
        <dbReference type="PROSITE-ProRule" id="PRU00316"/>
    </source>
</evidence>
<evidence type="ECO:0000256" key="4">
    <source>
        <dbReference type="SAM" id="MobiDB-lite"/>
    </source>
</evidence>
<evidence type="ECO:0000269" key="5">
    <source>
    </source>
</evidence>
<evidence type="ECO:0000269" key="6">
    <source>
    </source>
</evidence>
<evidence type="ECO:0000269" key="7">
    <source>
    </source>
</evidence>
<evidence type="ECO:0000269" key="8">
    <source>
    </source>
</evidence>
<evidence type="ECO:0000269" key="9">
    <source>
    </source>
</evidence>
<evidence type="ECO:0000269" key="10">
    <source>
    </source>
</evidence>
<evidence type="ECO:0000269" key="11">
    <source>
    </source>
</evidence>
<evidence type="ECO:0000269" key="12">
    <source>
    </source>
</evidence>
<evidence type="ECO:0000269" key="13">
    <source>
    </source>
</evidence>
<evidence type="ECO:0000303" key="14">
    <source>
    </source>
</evidence>
<evidence type="ECO:0000305" key="15"/>
<evidence type="ECO:0000305" key="16">
    <source>
    </source>
</evidence>
<evidence type="ECO:0000305" key="17">
    <source>
    </source>
</evidence>
<evidence type="ECO:0000312" key="18">
    <source>
        <dbReference type="EMBL" id="AAH96471.1"/>
    </source>
</evidence>
<evidence type="ECO:0000312" key="19">
    <source>
        <dbReference type="EMBL" id="AAR92202.1"/>
    </source>
</evidence>
<evidence type="ECO:0000312" key="20">
    <source>
        <dbReference type="EMBL" id="BAD32223.1"/>
    </source>
</evidence>
<evidence type="ECO:0000312" key="21">
    <source>
        <dbReference type="MGI" id="MGI:3603594"/>
    </source>
</evidence>
<evidence type="ECO:0000312" key="22">
    <source>
        <dbReference type="Proteomes" id="UP000000589"/>
    </source>
</evidence>
<evidence type="ECO:0007744" key="23">
    <source>
        <dbReference type="PDB" id="4V2C"/>
    </source>
</evidence>
<evidence type="ECO:0007744" key="24">
    <source>
        <dbReference type="PDB" id="4V2D"/>
    </source>
</evidence>
<evidence type="ECO:0007829" key="25">
    <source>
        <dbReference type="PDB" id="4V2D"/>
    </source>
</evidence>
<evidence type="ECO:0007829" key="26">
    <source>
        <dbReference type="PDB" id="5FTT"/>
    </source>
</evidence>
<gene>
    <name evidence="21" type="primary">Flrt2</name>
    <name evidence="14" type="synonym">Kiaa0405</name>
</gene>
<name>FLRT2_MOUSE</name>
<feature type="signal peptide" evidence="2">
    <location>
        <begin position="1"/>
        <end position="35"/>
    </location>
</feature>
<feature type="chain" id="PRO_0000434523" description="Leucine-rich repeat transmembrane protein FLRT2">
    <location>
        <begin position="36"/>
        <end position="660"/>
    </location>
</feature>
<feature type="topological domain" description="Extracellular" evidence="15">
    <location>
        <begin position="36"/>
        <end position="540"/>
    </location>
</feature>
<feature type="transmembrane region" description="Helical" evidence="2">
    <location>
        <begin position="541"/>
        <end position="561"/>
    </location>
</feature>
<feature type="topological domain" description="Cytoplasmic" evidence="15">
    <location>
        <begin position="562"/>
        <end position="660"/>
    </location>
</feature>
<feature type="domain" description="LRRNT" evidence="2">
    <location>
        <begin position="36"/>
        <end position="63"/>
    </location>
</feature>
<feature type="repeat" description="LRR 1" evidence="2">
    <location>
        <begin position="62"/>
        <end position="87"/>
    </location>
</feature>
<feature type="repeat" description="LRR 2" evidence="2">
    <location>
        <begin position="88"/>
        <end position="108"/>
    </location>
</feature>
<feature type="repeat" description="LRR 3" evidence="2">
    <location>
        <begin position="109"/>
        <end position="131"/>
    </location>
</feature>
<feature type="repeat" description="LRR 4" evidence="2">
    <location>
        <begin position="132"/>
        <end position="157"/>
    </location>
</feature>
<feature type="repeat" description="LRR 5" evidence="2">
    <location>
        <begin position="159"/>
        <end position="181"/>
    </location>
</feature>
<feature type="repeat" description="LRR 6" evidence="2">
    <location>
        <begin position="183"/>
        <end position="202"/>
    </location>
</feature>
<feature type="repeat" description="LRR 7" evidence="2">
    <location>
        <begin position="203"/>
        <end position="228"/>
    </location>
</feature>
<feature type="repeat" description="LRR 8" evidence="2">
    <location>
        <begin position="229"/>
        <end position="251"/>
    </location>
</feature>
<feature type="repeat" description="LRR 9" evidence="2">
    <location>
        <begin position="252"/>
        <end position="274"/>
    </location>
</feature>
<feature type="repeat" description="LRR 10" evidence="2">
    <location>
        <begin position="275"/>
        <end position="298"/>
    </location>
</feature>
<feature type="domain" description="LRRCT" evidence="2">
    <location>
        <begin position="310"/>
        <end position="362"/>
    </location>
</feature>
<feature type="domain" description="Fibronectin type-III" evidence="3">
    <location>
        <begin position="419"/>
        <end position="517"/>
    </location>
</feature>
<feature type="region of interest" description="Disordered" evidence="4">
    <location>
        <begin position="371"/>
        <end position="413"/>
    </location>
</feature>
<feature type="compositionally biased region" description="Low complexity" evidence="4">
    <location>
        <begin position="371"/>
        <end position="396"/>
    </location>
</feature>
<feature type="glycosylation site" description="N-linked (GlcNAc...) asparagine" evidence="2">
    <location>
        <position position="202"/>
    </location>
</feature>
<feature type="disulfide bond" evidence="23 24">
    <location>
        <begin position="36"/>
        <end position="42"/>
    </location>
</feature>
<feature type="disulfide bond" evidence="23 24">
    <location>
        <begin position="40"/>
        <end position="49"/>
    </location>
</feature>
<feature type="disulfide bond" evidence="23 24">
    <location>
        <begin position="314"/>
        <end position="339"/>
    </location>
</feature>
<feature type="disulfide bond" evidence="23 24">
    <location>
        <begin position="316"/>
        <end position="360"/>
    </location>
</feature>
<feature type="mutagenesis site" description="Abolishes interaction with UNC5D." evidence="12">
    <original>H</original>
    <variation>E</variation>
    <variation>N</variation>
    <location>
        <position position="170"/>
    </location>
</feature>
<feature type="mutagenesis site" description="Abolishes homooligomerization and FLRT2-mediated cell-cell adhesion; when associated with T-188." evidence="12">
    <original>R</original>
    <variation>N</variation>
    <location>
        <position position="186"/>
    </location>
</feature>
<feature type="mutagenesis site" description="Abolishes homooligomerization and FLRT2-mediated cell-cell adhesion; when associated with N-186." evidence="12">
    <original>D</original>
    <variation>T</variation>
    <location>
        <position position="188"/>
    </location>
</feature>
<feature type="mutagenesis site" description="No effect on interaction with UNC5D; when associated with T-250." evidence="12">
    <original>D</original>
    <variation>N</variation>
    <location>
        <position position="248"/>
    </location>
</feature>
<feature type="mutagenesis site" description="No effect on interaction with UNC5D; when associated with N-248." evidence="12">
    <original>P</original>
    <variation>T</variation>
    <location>
        <position position="250"/>
    </location>
</feature>
<feature type="strand" evidence="25">
    <location>
        <begin position="38"/>
        <end position="43"/>
    </location>
</feature>
<feature type="strand" evidence="25">
    <location>
        <begin position="46"/>
        <end position="48"/>
    </location>
</feature>
<feature type="strand" evidence="25">
    <location>
        <begin position="66"/>
        <end position="69"/>
    </location>
</feature>
<feature type="helix" evidence="25">
    <location>
        <begin position="82"/>
        <end position="84"/>
    </location>
</feature>
<feature type="strand" evidence="25">
    <location>
        <begin position="92"/>
        <end position="94"/>
    </location>
</feature>
<feature type="strand" evidence="25">
    <location>
        <begin position="113"/>
        <end position="115"/>
    </location>
</feature>
<feature type="helix" evidence="25">
    <location>
        <begin position="126"/>
        <end position="131"/>
    </location>
</feature>
<feature type="strand" evidence="25">
    <location>
        <begin position="137"/>
        <end position="139"/>
    </location>
</feature>
<feature type="turn" evidence="25">
    <location>
        <begin position="147"/>
        <end position="149"/>
    </location>
</feature>
<feature type="turn" evidence="25">
    <location>
        <begin position="152"/>
        <end position="154"/>
    </location>
</feature>
<feature type="helix" evidence="25">
    <location>
        <begin position="155"/>
        <end position="157"/>
    </location>
</feature>
<feature type="strand" evidence="25">
    <location>
        <begin position="163"/>
        <end position="165"/>
    </location>
</feature>
<feature type="strand" evidence="25">
    <location>
        <begin position="184"/>
        <end position="186"/>
    </location>
</feature>
<feature type="turn" evidence="25">
    <location>
        <begin position="197"/>
        <end position="200"/>
    </location>
</feature>
<feature type="strand" evidence="25">
    <location>
        <begin position="208"/>
        <end position="210"/>
    </location>
</feature>
<feature type="turn" evidence="25">
    <location>
        <begin position="218"/>
        <end position="220"/>
    </location>
</feature>
<feature type="helix" evidence="26">
    <location>
        <begin position="226"/>
        <end position="228"/>
    </location>
</feature>
<feature type="strand" evidence="25">
    <location>
        <begin position="234"/>
        <end position="236"/>
    </location>
</feature>
<feature type="strand" evidence="25">
    <location>
        <begin position="256"/>
        <end position="258"/>
    </location>
</feature>
<feature type="turn" evidence="25">
    <location>
        <begin position="269"/>
        <end position="271"/>
    </location>
</feature>
<feature type="turn" evidence="26">
    <location>
        <begin position="272"/>
        <end position="274"/>
    </location>
</feature>
<feature type="strand" evidence="25">
    <location>
        <begin position="280"/>
        <end position="282"/>
    </location>
</feature>
<feature type="strand" evidence="25">
    <location>
        <begin position="295"/>
        <end position="298"/>
    </location>
</feature>
<feature type="strand" evidence="25">
    <location>
        <begin position="304"/>
        <end position="306"/>
    </location>
</feature>
<feature type="helix" evidence="25">
    <location>
        <begin position="316"/>
        <end position="318"/>
    </location>
</feature>
<feature type="helix" evidence="25">
    <location>
        <begin position="319"/>
        <end position="327"/>
    </location>
</feature>
<feature type="strand" evidence="25">
    <location>
        <begin position="332"/>
        <end position="335"/>
    </location>
</feature>
<feature type="strand" evidence="25">
    <location>
        <begin position="338"/>
        <end position="342"/>
    </location>
</feature>
<feature type="turn" evidence="25">
    <location>
        <begin position="343"/>
        <end position="347"/>
    </location>
</feature>
<feature type="helix" evidence="25">
    <location>
        <begin position="350"/>
        <end position="352"/>
    </location>
</feature>
<feature type="turn" evidence="26">
    <location>
        <begin position="355"/>
        <end position="359"/>
    </location>
</feature>
<accession>Q8BLU0</accession>
<accession>Q6A073</accession>
<protein>
    <recommendedName>
        <fullName evidence="15">Leucine-rich repeat transmembrane protein FLRT2</fullName>
    </recommendedName>
    <alternativeName>
        <fullName evidence="18">Fibronectin leucine rich transmembrane protein 2</fullName>
    </alternativeName>
</protein>
<proteinExistence type="evidence at protein level"/>
<organism>
    <name type="scientific">Mus musculus</name>
    <name type="common">Mouse</name>
    <dbReference type="NCBI Taxonomy" id="10090"/>
    <lineage>
        <taxon>Eukaryota</taxon>
        <taxon>Metazoa</taxon>
        <taxon>Chordata</taxon>
        <taxon>Craniata</taxon>
        <taxon>Vertebrata</taxon>
        <taxon>Euteleostomi</taxon>
        <taxon>Mammalia</taxon>
        <taxon>Eutheria</taxon>
        <taxon>Euarchontoglires</taxon>
        <taxon>Glires</taxon>
        <taxon>Rodentia</taxon>
        <taxon>Myomorpha</taxon>
        <taxon>Muroidea</taxon>
        <taxon>Muridae</taxon>
        <taxon>Murinae</taxon>
        <taxon>Mus</taxon>
        <taxon>Mus</taxon>
    </lineage>
</organism>
<reference evidence="19" key="1">
    <citation type="journal article" date="2006" name="Dev. Biol.">
        <title>Regulated expression of FLRT genes implies a functional role in the regulation of FGF signalling during mouse development.</title>
        <authorList>
            <person name="Haines B.P."/>
            <person name="Wheldon L.M."/>
            <person name="Summerbell D."/>
            <person name="Heath J.K."/>
            <person name="Rigby P.W.J."/>
        </authorList>
    </citation>
    <scope>NUCLEOTIDE SEQUENCE [MRNA]</scope>
    <scope>FUNCTION</scope>
    <scope>INTERACTION WITH FGFR1</scope>
    <scope>SUBCELLULAR LOCATION</scope>
    <scope>GLYCOSYLATION</scope>
    <scope>DEVELOPMENTAL STAGE</scope>
    <scope>INDUCTION BY FGF2</scope>
    <source>
        <strain evidence="19">C57BL/6 X CBA</strain>
    </source>
</reference>
<reference key="2">
    <citation type="journal article" date="2005" name="Science">
        <title>The transcriptional landscape of the mammalian genome.</title>
        <authorList>
            <person name="Carninci P."/>
            <person name="Kasukawa T."/>
            <person name="Katayama S."/>
            <person name="Gough J."/>
            <person name="Frith M.C."/>
            <person name="Maeda N."/>
            <person name="Oyama R."/>
            <person name="Ravasi T."/>
            <person name="Lenhard B."/>
            <person name="Wells C."/>
            <person name="Kodzius R."/>
            <person name="Shimokawa K."/>
            <person name="Bajic V.B."/>
            <person name="Brenner S.E."/>
            <person name="Batalov S."/>
            <person name="Forrest A.R."/>
            <person name="Zavolan M."/>
            <person name="Davis M.J."/>
            <person name="Wilming L.G."/>
            <person name="Aidinis V."/>
            <person name="Allen J.E."/>
            <person name="Ambesi-Impiombato A."/>
            <person name="Apweiler R."/>
            <person name="Aturaliya R.N."/>
            <person name="Bailey T.L."/>
            <person name="Bansal M."/>
            <person name="Baxter L."/>
            <person name="Beisel K.W."/>
            <person name="Bersano T."/>
            <person name="Bono H."/>
            <person name="Chalk A.M."/>
            <person name="Chiu K.P."/>
            <person name="Choudhary V."/>
            <person name="Christoffels A."/>
            <person name="Clutterbuck D.R."/>
            <person name="Crowe M.L."/>
            <person name="Dalla E."/>
            <person name="Dalrymple B.P."/>
            <person name="de Bono B."/>
            <person name="Della Gatta G."/>
            <person name="di Bernardo D."/>
            <person name="Down T."/>
            <person name="Engstrom P."/>
            <person name="Fagiolini M."/>
            <person name="Faulkner G."/>
            <person name="Fletcher C.F."/>
            <person name="Fukushima T."/>
            <person name="Furuno M."/>
            <person name="Futaki S."/>
            <person name="Gariboldi M."/>
            <person name="Georgii-Hemming P."/>
            <person name="Gingeras T.R."/>
            <person name="Gojobori T."/>
            <person name="Green R.E."/>
            <person name="Gustincich S."/>
            <person name="Harbers M."/>
            <person name="Hayashi Y."/>
            <person name="Hensch T.K."/>
            <person name="Hirokawa N."/>
            <person name="Hill D."/>
            <person name="Huminiecki L."/>
            <person name="Iacono M."/>
            <person name="Ikeo K."/>
            <person name="Iwama A."/>
            <person name="Ishikawa T."/>
            <person name="Jakt M."/>
            <person name="Kanapin A."/>
            <person name="Katoh M."/>
            <person name="Kawasawa Y."/>
            <person name="Kelso J."/>
            <person name="Kitamura H."/>
            <person name="Kitano H."/>
            <person name="Kollias G."/>
            <person name="Krishnan S.P."/>
            <person name="Kruger A."/>
            <person name="Kummerfeld S.K."/>
            <person name="Kurochkin I.V."/>
            <person name="Lareau L.F."/>
            <person name="Lazarevic D."/>
            <person name="Lipovich L."/>
            <person name="Liu J."/>
            <person name="Liuni S."/>
            <person name="McWilliam S."/>
            <person name="Madan Babu M."/>
            <person name="Madera M."/>
            <person name="Marchionni L."/>
            <person name="Matsuda H."/>
            <person name="Matsuzawa S."/>
            <person name="Miki H."/>
            <person name="Mignone F."/>
            <person name="Miyake S."/>
            <person name="Morris K."/>
            <person name="Mottagui-Tabar S."/>
            <person name="Mulder N."/>
            <person name="Nakano N."/>
            <person name="Nakauchi H."/>
            <person name="Ng P."/>
            <person name="Nilsson R."/>
            <person name="Nishiguchi S."/>
            <person name="Nishikawa S."/>
            <person name="Nori F."/>
            <person name="Ohara O."/>
            <person name="Okazaki Y."/>
            <person name="Orlando V."/>
            <person name="Pang K.C."/>
            <person name="Pavan W.J."/>
            <person name="Pavesi G."/>
            <person name="Pesole G."/>
            <person name="Petrovsky N."/>
            <person name="Piazza S."/>
            <person name="Reed J."/>
            <person name="Reid J.F."/>
            <person name="Ring B.Z."/>
            <person name="Ringwald M."/>
            <person name="Rost B."/>
            <person name="Ruan Y."/>
            <person name="Salzberg S.L."/>
            <person name="Sandelin A."/>
            <person name="Schneider C."/>
            <person name="Schoenbach C."/>
            <person name="Sekiguchi K."/>
            <person name="Semple C.A."/>
            <person name="Seno S."/>
            <person name="Sessa L."/>
            <person name="Sheng Y."/>
            <person name="Shibata Y."/>
            <person name="Shimada H."/>
            <person name="Shimada K."/>
            <person name="Silva D."/>
            <person name="Sinclair B."/>
            <person name="Sperling S."/>
            <person name="Stupka E."/>
            <person name="Sugiura K."/>
            <person name="Sultana R."/>
            <person name="Takenaka Y."/>
            <person name="Taki K."/>
            <person name="Tammoja K."/>
            <person name="Tan S.L."/>
            <person name="Tang S."/>
            <person name="Taylor M.S."/>
            <person name="Tegner J."/>
            <person name="Teichmann S.A."/>
            <person name="Ueda H.R."/>
            <person name="van Nimwegen E."/>
            <person name="Verardo R."/>
            <person name="Wei C.L."/>
            <person name="Yagi K."/>
            <person name="Yamanishi H."/>
            <person name="Zabarovsky E."/>
            <person name="Zhu S."/>
            <person name="Zimmer A."/>
            <person name="Hide W."/>
            <person name="Bult C."/>
            <person name="Grimmond S.M."/>
            <person name="Teasdale R.D."/>
            <person name="Liu E.T."/>
            <person name="Brusic V."/>
            <person name="Quackenbush J."/>
            <person name="Wahlestedt C."/>
            <person name="Mattick J.S."/>
            <person name="Hume D.A."/>
            <person name="Kai C."/>
            <person name="Sasaki D."/>
            <person name="Tomaru Y."/>
            <person name="Fukuda S."/>
            <person name="Kanamori-Katayama M."/>
            <person name="Suzuki M."/>
            <person name="Aoki J."/>
            <person name="Arakawa T."/>
            <person name="Iida J."/>
            <person name="Imamura K."/>
            <person name="Itoh M."/>
            <person name="Kato T."/>
            <person name="Kawaji H."/>
            <person name="Kawagashira N."/>
            <person name="Kawashima T."/>
            <person name="Kojima M."/>
            <person name="Kondo S."/>
            <person name="Konno H."/>
            <person name="Nakano K."/>
            <person name="Ninomiya N."/>
            <person name="Nishio T."/>
            <person name="Okada M."/>
            <person name="Plessy C."/>
            <person name="Shibata K."/>
            <person name="Shiraki T."/>
            <person name="Suzuki S."/>
            <person name="Tagami M."/>
            <person name="Waki K."/>
            <person name="Watahiki A."/>
            <person name="Okamura-Oho Y."/>
            <person name="Suzuki H."/>
            <person name="Kawai J."/>
            <person name="Hayashizaki Y."/>
        </authorList>
    </citation>
    <scope>NUCLEOTIDE SEQUENCE [LARGE SCALE MRNA]</scope>
    <source>
        <strain>C57BL/6J</strain>
        <tissue>Cerebellum</tissue>
    </source>
</reference>
<reference evidence="22" key="3">
    <citation type="journal article" date="2009" name="PLoS Biol.">
        <title>Lineage-specific biology revealed by a finished genome assembly of the mouse.</title>
        <authorList>
            <person name="Church D.M."/>
            <person name="Goodstadt L."/>
            <person name="Hillier L.W."/>
            <person name="Zody M.C."/>
            <person name="Goldstein S."/>
            <person name="She X."/>
            <person name="Bult C.J."/>
            <person name="Agarwala R."/>
            <person name="Cherry J.L."/>
            <person name="DiCuccio M."/>
            <person name="Hlavina W."/>
            <person name="Kapustin Y."/>
            <person name="Meric P."/>
            <person name="Maglott D."/>
            <person name="Birtle Z."/>
            <person name="Marques A.C."/>
            <person name="Graves T."/>
            <person name="Zhou S."/>
            <person name="Teague B."/>
            <person name="Potamousis K."/>
            <person name="Churas C."/>
            <person name="Place M."/>
            <person name="Herschleb J."/>
            <person name="Runnheim R."/>
            <person name="Forrest D."/>
            <person name="Amos-Landgraf J."/>
            <person name="Schwartz D.C."/>
            <person name="Cheng Z."/>
            <person name="Lindblad-Toh K."/>
            <person name="Eichler E.E."/>
            <person name="Ponting C.P."/>
        </authorList>
    </citation>
    <scope>NUCLEOTIDE SEQUENCE [LARGE SCALE GENOMIC DNA]</scope>
    <source>
        <strain evidence="22">C57BL/6J</strain>
    </source>
</reference>
<reference key="4">
    <citation type="submission" date="2005-09" db="EMBL/GenBank/DDBJ databases">
        <authorList>
            <person name="Mural R.J."/>
            <person name="Adams M.D."/>
            <person name="Myers E.W."/>
            <person name="Smith H.O."/>
            <person name="Venter J.C."/>
        </authorList>
    </citation>
    <scope>NUCLEOTIDE SEQUENCE [LARGE SCALE GENOMIC DNA]</scope>
</reference>
<reference key="5">
    <citation type="journal article" date="2004" name="Genome Res.">
        <title>The status, quality, and expansion of the NIH full-length cDNA project: the Mammalian Gene Collection (MGC).</title>
        <authorList>
            <consortium name="The MGC Project Team"/>
        </authorList>
    </citation>
    <scope>NUCLEOTIDE SEQUENCE [LARGE SCALE MRNA]</scope>
    <source>
        <strain>FVB/N</strain>
        <tissue>Brain</tissue>
        <tissue>Mammary cancer</tissue>
    </source>
</reference>
<reference evidence="20" key="6">
    <citation type="journal article" date="2004" name="DNA Res.">
        <title>Prediction of the coding sequences of mouse homologues of KIAA gene: IV. The complete nucleotide sequences of 500 mouse KIAA-homologous cDNAs identified by screening of terminal sequences of cDNA clones randomly sampled from size-fractionated libraries.</title>
        <authorList>
            <person name="Okazaki N."/>
            <person name="Kikuno R."/>
            <person name="Ohara R."/>
            <person name="Inamoto S."/>
            <person name="Koseki H."/>
            <person name="Hiraoka S."/>
            <person name="Saga Y."/>
            <person name="Seino S."/>
            <person name="Nishimura M."/>
            <person name="Kaisho T."/>
            <person name="Hoshino K."/>
            <person name="Kitamura H."/>
            <person name="Nagase T."/>
            <person name="Ohara O."/>
            <person name="Koga H."/>
        </authorList>
    </citation>
    <scope>NUCLEOTIDE SEQUENCE [LARGE SCALE MRNA] OF 24-660</scope>
    <source>
        <tissue evidence="20">Brain</tissue>
    </source>
</reference>
<reference key="7">
    <citation type="journal article" date="2008" name="Dev. Biol.">
        <title>Ventral closure, headfold fusion and definitive endoderm migration defects in mouse embryos lacking the fibronectin leucine-rich transmembrane protein FLRT3.</title>
        <authorList>
            <person name="Maretto S."/>
            <person name="Mueller P.S."/>
            <person name="Aricescu A.R."/>
            <person name="Cho K.W."/>
            <person name="Bikoff E.K."/>
            <person name="Robertson E.J."/>
        </authorList>
    </citation>
    <scope>DEVELOPMENTAL STAGE</scope>
</reference>
<reference key="8">
    <citation type="journal article" date="2011" name="Development">
        <title>The fibronectin leucine-rich repeat transmembrane protein Flrt2 is required in the epicardium to promote heart morphogenesis.</title>
        <authorList>
            <person name="Mueller P.S."/>
            <person name="Schulz R."/>
            <person name="Maretto S."/>
            <person name="Costello I."/>
            <person name="Srinivas S."/>
            <person name="Bikoff E."/>
            <person name="Robertson E."/>
        </authorList>
    </citation>
    <scope>DISRUPTION PHENOTYPE</scope>
    <scope>FUNCTION</scope>
    <scope>DEVELOPMENTAL STAGE</scope>
    <scope>TISSUE SPECIFICITY</scope>
</reference>
<reference key="9">
    <citation type="journal article" date="2011" name="EMBO J.">
        <title>FLRT2 and FLRT3 act as repulsive guidance cues for Unc5-positive neurons.</title>
        <authorList>
            <person name="Yamagishi S."/>
            <person name="Hampel F."/>
            <person name="Hata K."/>
            <person name="Del Toro D."/>
            <person name="Schwark M."/>
            <person name="Kvachnina E."/>
            <person name="Bastmeyer M."/>
            <person name="Yamashita T."/>
            <person name="Tarabykin V."/>
            <person name="Klein R."/>
            <person name="Egea J."/>
        </authorList>
    </citation>
    <scope>SUBCELLULAR LOCATION</scope>
    <scope>PROTEOLYTIC CLEAVAGE</scope>
    <scope>DEVELOPMENTAL STAGE</scope>
    <scope>GLYCOSYLATION</scope>
    <scope>INTERACTION WITH UNC5D AND UNC5B</scope>
</reference>
<reference key="10">
    <citation type="journal article" date="2011" name="J. Dent. Res.">
        <title>Mouse FLRT2 interacts with the extracellular and intracellular regions of FGFR2.</title>
        <authorList>
            <person name="Wei K."/>
            <person name="Xu Y."/>
            <person name="Tse H."/>
            <person name="Manolson M.F."/>
            <person name="Gong S.G."/>
        </authorList>
    </citation>
    <scope>INTERACTION WITH FGFR2</scope>
</reference>
<reference key="11">
    <citation type="journal article" date="2012" name="Neuron">
        <title>FLRT proteins are endogenous latrophilin ligands and regulate excitatory synapse development.</title>
        <authorList>
            <person name="O'Sullivan M.L."/>
            <person name="de Wit J."/>
            <person name="Savas J.N."/>
            <person name="Comoletti D."/>
            <person name="Otto-Hitt S."/>
            <person name="Yates J.R. III"/>
            <person name="Ghosh A."/>
        </authorList>
    </citation>
    <scope>INTERACTION WITH ADGRL1 AND ADGRL3</scope>
    <scope>SUBCELLULAR LOCATION</scope>
</reference>
<reference key="12">
    <citation type="journal article" date="2014" name="J. Cell. Physiol.">
        <title>FLRT2 interacts with fibronectin in the ATDC5 chondroprogenitor cells.</title>
        <authorList>
            <person name="Flintoff K.A."/>
            <person name="Arudchelvan Y."/>
            <person name="Gong S.G."/>
        </authorList>
    </citation>
    <scope>SUBCELLULAR LOCATION</scope>
    <scope>INTERACTION WITH FN1</scope>
</reference>
<reference key="13">
    <citation type="journal article" date="2015" name="Structure">
        <title>Structural basis of latrophilin-FLRT interaction.</title>
        <authorList>
            <person name="Jackson V.A."/>
            <person name="del Toro D."/>
            <person name="Carrasquero M."/>
            <person name="Roversi P."/>
            <person name="Harlos K."/>
            <person name="Klein R."/>
            <person name="Seiradake E."/>
        </authorList>
    </citation>
    <scope>INTERACTION WITH ADGRL3</scope>
    <scope>FUNCTION</scope>
</reference>
<reference evidence="23 24" key="14">
    <citation type="journal article" date="2014" name="Neuron">
        <title>FLRT structure: balancing repulsion and cell adhesion in cortical and vascular development.</title>
        <authorList>
            <person name="Seiradake E."/>
            <person name="del Toro D."/>
            <person name="Nagel D."/>
            <person name="Cop F."/>
            <person name="Haertl R."/>
            <person name="Ruff T."/>
            <person name="Seyit-Bremer G."/>
            <person name="Harlos K."/>
            <person name="Border E.C."/>
            <person name="Acker-Palmer A."/>
            <person name="Jones E.Y."/>
            <person name="Klein R."/>
        </authorList>
    </citation>
    <scope>X-RAY CRYSTALLOGRAPHY (2.50 ANGSTROMS) OF 36-361 IN COMPLEX WITH UNC5D</scope>
    <scope>FUNCTION</scope>
    <scope>SUBCELLULAR LOCATION</scope>
    <scope>SUBUNIT</scope>
    <scope>INTERACTION WITH UNC5D</scope>
    <scope>DISULFIDE BONDS</scope>
    <scope>DOMAIN</scope>
    <scope>MUTAGENESIS OF HIS-170; ARG-186; ASP-188; ASP-248 AND PRO-250</scope>
</reference>
<comment type="function">
    <text evidence="5 7 8 12 13">Functions in cell-cell adhesion, cell migration and axon guidance. Mediates cell-cell adhesion via its interactions with ADGRL3 and probably also other latrophilins that are expressed at the surface of adjacent cells (PubMed:21350012, PubMed:25374360, PubMed:25728924). May play a role in the migration of cortical neurons during brain development via its interaction with UNC5D (PubMed:21673655). Mediates axon growth cone collapse and plays a repulsive role in neuron guidance via its interaction with UNC5D, and possibly also other UNC-5 family members (PubMed:21673655, PubMed:25728924). Plays a role in fibroblast growth factor-mediated signaling cascades (PubMed:16872596). Required for normal organization of the cardiac basement membrane during embryogenesis, and for normal embryonic epicardium and heart morphogenesis (PubMed:21350012).</text>
</comment>
<comment type="subunit">
    <text evidence="5 8 9 10 11 12 13">Self-associates (via leucine-rich repeats), giving rise to homooligomers (PubMed:25374360). Interacts with FGFR1 (PubMed:16872596). Interacts with FGFR2 (PubMed:21765038). Interacts (via extracellular domain) with ADGRL1/LPHN1 (PubMed:22405201). Interacts (via extracellular domain) with ADGRL3 (via olfactomedin-like domain) (PubMed:22405201, PubMed:25728924). Interacts (via extracellular domain) with UNC5D (via the first Ig-like domain) (PubMed:21673655, PubMed:25374360). Can also interact (via extracellular domain) with UNC5B, but with much lower affinity (PubMed:21673655). Interacts (via extracellular domain) with FN1 (PubMed:24585683).</text>
</comment>
<comment type="interaction">
    <interactant intactId="EBI-16146541">
        <id>Q8BLU0</id>
    </interactant>
    <interactant intactId="EBI-770665">
        <id>Q80TS3</id>
        <label>Adgrl3</label>
    </interactant>
    <organismsDiffer>false</organismsDiffer>
    <experiments>2</experiments>
</comment>
<comment type="subcellular location">
    <subcellularLocation>
        <location evidence="5 10 11 12">Cell membrane</location>
        <topology evidence="15">Single-pass membrane protein</topology>
    </subcellularLocation>
    <subcellularLocation>
        <location evidence="16 17">Endoplasmic reticulum membrane</location>
    </subcellularLocation>
    <subcellularLocation>
        <location evidence="5">Cell junction</location>
        <location evidence="5">Focal adhesion</location>
    </subcellularLocation>
    <subcellularLocation>
        <location evidence="11">Secreted</location>
        <location evidence="11">Extracellular space</location>
        <location evidence="11">Extracellular matrix</location>
    </subcellularLocation>
    <subcellularLocation>
        <location evidence="1">Synapse</location>
        <location evidence="1">Synaptosome</location>
    </subcellularLocation>
    <subcellularLocation>
        <location evidence="11">Microsome membrane</location>
    </subcellularLocation>
    <subcellularLocation>
        <location evidence="8">Secreted</location>
    </subcellularLocation>
    <text evidence="8">Proteolytic cleavage gives rise to a shedded ectodomain.</text>
</comment>
<comment type="tissue specificity">
    <text evidence="7">Detected in adult brain (at protein level).</text>
</comment>
<comment type="developmental stage">
    <text evidence="5 6 7 8">Detected in embryonic brain at 13 dpc. Levels in brain decrease gradually after 15 dpc, but expression continues after birth (PubMed:21673655). Detected in embryonic myocardium, body wall and pro-epicardial organ at 9.5 dpc. Detected in the epicardial cell layer and throughout the myocardium at 10.5 dpc. Highly expressed in embryonic and neonate heart, but after that levels decrease strongly, and the protein is barely detectable 3 weeks after birth, with even lower levels after 7 and 15 weeks (at protein level) (PubMed:21350012). Detected in the anterior endoderm at 7.5 dpc. Detected on anterior somites, the allantois and mesenchymal tissue behind the developing heart at 8.5 dpc (PubMed:18448090). Detected in the cephalic mesenchyme and in tissue posterior to the developing heart at 9.5 and 10.5 dpc. Detected in the developing stomach and in a subset of the trunk sclerotome at 10.5 dpc. At 11 dpc, detected also in branchial arches, eyes and limbs (PubMed:16872596, PubMed:18448090).</text>
</comment>
<comment type="induction">
    <text evidence="5">Up-regulated by FGF2.</text>
</comment>
<comment type="PTM">
    <text evidence="5 8">N-glycosylated.</text>
</comment>
<comment type="PTM">
    <text evidence="8">Proteolytic cleavage in the juxtamembrane region gives rise to a soluble ectodomain. Cleavage is probably effected by a metalloprotease.</text>
</comment>
<comment type="disruption phenotype">
    <text evidence="7">Heterozygous mice are viable and fertile, but homozygous mice display nearly complete embryonic lethality. Most embryos die at about 12.5 dpc, probably due to impaired expansion of the ventricular myocardium during development, reduced endocardial volume and heart insufficiency. Contrary to wild-type, the epicardium appears ruffled and presents numerous holes, due to defective formation of cell-cell adhesions. Still, there is a very small percentage of life-born pups that survive at least up to weaning.</text>
</comment>
<keyword id="KW-0002">3D-structure</keyword>
<keyword id="KW-0130">Cell adhesion</keyword>
<keyword id="KW-0965">Cell junction</keyword>
<keyword id="KW-1003">Cell membrane</keyword>
<keyword id="KW-0217">Developmental protein</keyword>
<keyword id="KW-1015">Disulfide bond</keyword>
<keyword id="KW-0256">Endoplasmic reticulum</keyword>
<keyword id="KW-0272">Extracellular matrix</keyword>
<keyword id="KW-0325">Glycoprotein</keyword>
<keyword id="KW-0433">Leucine-rich repeat</keyword>
<keyword id="KW-0472">Membrane</keyword>
<keyword id="KW-0492">Microsome</keyword>
<keyword id="KW-1185">Reference proteome</keyword>
<keyword id="KW-0677">Repeat</keyword>
<keyword id="KW-0964">Secreted</keyword>
<keyword id="KW-0732">Signal</keyword>
<keyword id="KW-0770">Synapse</keyword>
<keyword id="KW-0771">Synaptosome</keyword>
<keyword id="KW-0812">Transmembrane</keyword>
<keyword id="KW-1133">Transmembrane helix</keyword>
<sequence>MGLQTTKWPGRGAFILKFWLIISLGLYLQVSKLLACPSVCRCDRNFVYCNERSLTSVPLGIPEGVTVLYLHNNQINNAGFPAELHNVQSVHTVYLYGNQLDEFPMNLPKNVRVLHLQENNIQTISRAALAQLLKLEELHLDDNSISTVGVEDGAFREAISLKLLFLSKNHLSSVPVGLPVDLQELRVDENRIAVISDMAFQNLTSLERLIVDGNLLTNKGIAEGTFSHLTKLKEFSIVRNSLSHPPPDLPGTHLIRLYLQDNQINHIPLTAFANLRKLERLDISNNQLRMLTQGVFDHLSNLKQLTARNNPWFCDCSIKWVTEWLKYIPSSLNVRGFMCQGPEQVRGMAVRELNMNLLSCPTTTPGLPVFTPAPSTVSPTTQSPTLSVPSPSRGSVPPAPTPSKLPTIPDWDGRERVTPPISERIQLSIHFVNDTSIQVSWLSLFTVMAYKLTWVKMGHSLVGGIVQERIVSGEKQHLSLVNLEPRSTYRICLVPLDAFNYRTVEDTICSEATTHASYLNNGSNTASSHEQTTSHSMGSPFLLAGLIGGAVIFVLVVLLSVFCWHMHKKGRYTSQKWKYNRGRRKDDYCEAGTKKDNSILEMTETSFQIVSLNNDQLLKGDFRLQPIYTPNGGINYTDCHIPNNMRYCNSSVPDLEHCHT</sequence>